<organism>
    <name type="scientific">Strychnos sp</name>
    <dbReference type="NCBI Taxonomy" id="2946199"/>
    <lineage>
        <taxon>Eukaryota</taxon>
        <taxon>Viridiplantae</taxon>
        <taxon>Streptophyta</taxon>
        <taxon>Embryophyta</taxon>
        <taxon>Tracheophyta</taxon>
        <taxon>Spermatophyta</taxon>
        <taxon>Magnoliopsida</taxon>
        <taxon>eudicotyledons</taxon>
        <taxon>Gunneridae</taxon>
        <taxon>Pentapetalae</taxon>
        <taxon>asterids</taxon>
        <taxon>lamiids</taxon>
        <taxon>Gentianales</taxon>
        <taxon>Loganiaceae</taxon>
        <taxon>Strychnos</taxon>
    </lineage>
</organism>
<protein>
    <recommendedName>
        <fullName evidence="6">Diaboline synthase</fullName>
        <ecNumber evidence="3">2.3.1.326</ecNumber>
    </recommendedName>
    <alternativeName>
        <fullName>(19E)-17,18-epoxy-17-hydroxycur-19-ene N-acetyltransferase</fullName>
    </alternativeName>
    <alternativeName>
        <fullName evidence="4">Acyltransferase</fullName>
        <shortName evidence="4">SpAT</shortName>
    </alternativeName>
</protein>
<gene>
    <name evidence="4" type="primary">AT</name>
</gene>
<evidence type="ECO:0000250" key="1">
    <source>
        <dbReference type="UniProtKB" id="Q9FI78"/>
    </source>
</evidence>
<evidence type="ECO:0000250" key="2">
    <source>
        <dbReference type="UniProtKB" id="Q9ZTK5"/>
    </source>
</evidence>
<evidence type="ECO:0000269" key="3">
    <source>
    </source>
</evidence>
<evidence type="ECO:0000303" key="4">
    <source>
    </source>
</evidence>
<evidence type="ECO:0000305" key="5"/>
<evidence type="ECO:0000305" key="6">
    <source>
    </source>
</evidence>
<name>AT_STRYX</name>
<reference key="1">
    <citation type="journal article" date="2022" name="Nature">
        <title>Biosynthesis of strychnine.</title>
        <authorList>
            <person name="Hong B."/>
            <person name="Grzech D."/>
            <person name="Caputi L."/>
            <person name="Sonawane P."/>
            <person name="Lopez C.E.R."/>
            <person name="Kamileen M.O."/>
            <person name="Hernandez Lozada N.J."/>
            <person name="Grabe V."/>
            <person name="O'Connor S.E."/>
        </authorList>
    </citation>
    <scope>NUCLEOTIDE SEQUENCE [MRNA]</scope>
    <scope>FUNCTION</scope>
    <scope>CATALYTIC ACTIVITY</scope>
    <scope>PATHWAY</scope>
    <scope>SUBCELLULAR LOCATION</scope>
</reference>
<keyword id="KW-0012">Acyltransferase</keyword>
<keyword id="KW-0017">Alkaloid metabolism</keyword>
<keyword id="KW-0963">Cytoplasm</keyword>
<keyword id="KW-0808">Transferase</keyword>
<comment type="function">
    <text evidence="3">Acetyltransferase involved in the biosynthesis of curare monoterpene indole alkaloids (MIAs), natural products such as diaboline, a pharmacologically active compound used to regulate blood pressure (PubMed:35794473). Curare alkaloids act as animal glycine receptor antagonists (PubMed:35794473). Catalyzes the conversion of 17,18-epoxy-17-hydroxycur-19-ene (Wieland-Gumlich aldehyde) to diaboline (PubMed:35794473).</text>
</comment>
<comment type="catalytic activity">
    <reaction evidence="3">
        <text>17,18-epoxy-17-hydroxycur-19-ene + acetyl-CoA = diaboline + CoA</text>
        <dbReference type="Rhea" id="RHEA:80915"/>
        <dbReference type="ChEBI" id="CHEBI:57287"/>
        <dbReference type="ChEBI" id="CHEBI:57288"/>
        <dbReference type="ChEBI" id="CHEBI:231746"/>
        <dbReference type="ChEBI" id="CHEBI:231747"/>
        <dbReference type="EC" id="2.3.1.326"/>
    </reaction>
    <physiologicalReaction direction="left-to-right" evidence="3">
        <dbReference type="Rhea" id="RHEA:80916"/>
    </physiologicalReaction>
</comment>
<comment type="pathway">
    <text evidence="3">Alkaloid biosynthesis.</text>
</comment>
<comment type="subunit">
    <text evidence="2">Monomer.</text>
</comment>
<comment type="subcellular location">
    <subcellularLocation>
        <location evidence="3">Cytoplasm</location>
    </subcellularLocation>
</comment>
<comment type="similarity">
    <text evidence="5">Belongs to the plant acyltransferase family.</text>
</comment>
<feature type="chain" id="PRO_0000461125" description="Diaboline synthase">
    <location>
        <begin position="1"/>
        <end position="461"/>
    </location>
</feature>
<feature type="active site" description="Proton acceptor" evidence="1">
    <location>
        <position position="185"/>
    </location>
</feature>
<feature type="active site" description="Proton acceptor" evidence="1">
    <location>
        <position position="400"/>
    </location>
</feature>
<sequence>MGKITKFVKSKVCNSTNRAFPLIVNHHTMASFQIQIISETLIKPSSPTPPSLKQHQLSDYDKTMHHMYTPVAFLYTSHGHGIPSTDEVSQLLKNSLSKTLKHYSHFAGRLVGDSHVDCNDMGVKLLEVRVRCPMAEVLKRPNTDAQDLVYPKGLPWSMAKEDILVVAQISYFDCGGIAVSADISHKIVDVASITTFMNDWAAMARNSSYKPSPQIVSPTILKMDDVPATAEDDNMKENICQSRRFLFHDSKIAELKALAVNSGAENPTRVELVTAILHKCAVTASTAALGSFMPNILLLAVNLRSIISPPLAKTSIGNMSSCYAISATHENRMKFPLLAGELRRSKIKLFQKYGKQLNESELLFLNSTDKAHESQKLSDGDNFDCFIFSSLCRSPFYEVDFGWGRPVLVYVPNCPFKNTFFLIDTPTQDGIEALVTLEENVMQIFENDEGLLAFASLIKDS</sequence>
<accession>P0DXG0</accession>
<dbReference type="EC" id="2.3.1.326" evidence="3"/>
<dbReference type="EMBL" id="OM304304">
    <property type="protein sequence ID" value="UQZ09635.1"/>
    <property type="molecule type" value="mRNA"/>
</dbReference>
<dbReference type="SMR" id="P0DXG0"/>
<dbReference type="KEGG" id="ag:UQZ09635"/>
<dbReference type="GO" id="GO:0005737">
    <property type="term" value="C:cytoplasm"/>
    <property type="evidence" value="ECO:0000314"/>
    <property type="project" value="UniProtKB"/>
</dbReference>
<dbReference type="GO" id="GO:0016407">
    <property type="term" value="F:acetyltransferase activity"/>
    <property type="evidence" value="ECO:0000314"/>
    <property type="project" value="UniProtKB"/>
</dbReference>
<dbReference type="GO" id="GO:0009821">
    <property type="term" value="P:alkaloid biosynthetic process"/>
    <property type="evidence" value="ECO:0000314"/>
    <property type="project" value="UniProtKB"/>
</dbReference>
<dbReference type="Gene3D" id="3.30.559.10">
    <property type="entry name" value="Chloramphenicol acetyltransferase-like domain"/>
    <property type="match status" value="2"/>
</dbReference>
<dbReference type="InterPro" id="IPR023213">
    <property type="entry name" value="CAT-like_dom_sf"/>
</dbReference>
<dbReference type="PANTHER" id="PTHR31623:SF88">
    <property type="entry name" value="ACYLSUGAR ACYLTRANSFERASE 3-LIKE"/>
    <property type="match status" value="1"/>
</dbReference>
<dbReference type="PANTHER" id="PTHR31623">
    <property type="entry name" value="F21J9.9"/>
    <property type="match status" value="1"/>
</dbReference>
<dbReference type="Pfam" id="PF02458">
    <property type="entry name" value="Transferase"/>
    <property type="match status" value="1"/>
</dbReference>
<proteinExistence type="evidence at protein level"/>